<organism>
    <name type="scientific">Pseudomonas fluorescens (strain SBW25)</name>
    <dbReference type="NCBI Taxonomy" id="216595"/>
    <lineage>
        <taxon>Bacteria</taxon>
        <taxon>Pseudomonadati</taxon>
        <taxon>Pseudomonadota</taxon>
        <taxon>Gammaproteobacteria</taxon>
        <taxon>Pseudomonadales</taxon>
        <taxon>Pseudomonadaceae</taxon>
        <taxon>Pseudomonas</taxon>
    </lineage>
</organism>
<accession>C3KDW8</accession>
<evidence type="ECO:0000255" key="1">
    <source>
        <dbReference type="HAMAP-Rule" id="MF_00011"/>
    </source>
</evidence>
<keyword id="KW-0963">Cytoplasm</keyword>
<keyword id="KW-0342">GTP-binding</keyword>
<keyword id="KW-0436">Ligase</keyword>
<keyword id="KW-0460">Magnesium</keyword>
<keyword id="KW-0479">Metal-binding</keyword>
<keyword id="KW-0547">Nucleotide-binding</keyword>
<keyword id="KW-0658">Purine biosynthesis</keyword>
<sequence length="429" mass="46564">MGKNVVVLGTQWGDEGKGKIVDLLTEHAAAVVRYQGGHNAGHTLVIDGEKTVLHLIPSGVLREGVQCLIGNGVVVAPDALLREITKLEEKGVPVRERLRISPSCPLILSFHVALDQAREKARGELKIGTTGRGIGPAYEDKVARRGLRVGDLLNMPRFEDKLRELVDYHNFMLVGYYKEPAIEFEKTLAECKEYAELLKPLMLDVTAELHDLRRAGKDIMFEGAQGSLLDIDHGTYPYVTSSNTTAGGVATGSGVGPMFLDYILGITKAYTTRVGSGPFPTELFDEVGAHLAKQGHEFGATTGRARRCGWFDAVILRRAIDVNSISGICFTKLDVLDGLETINICVGYKDADGNDVAPTDADSYVGLQPVYEEVPGWTESTVGAKTLEELPANARAYIKRVEALIGAPIDIISTGPDRNETIVLRHPFA</sequence>
<protein>
    <recommendedName>
        <fullName evidence="1">Adenylosuccinate synthetase</fullName>
        <shortName evidence="1">AMPSase</shortName>
        <shortName evidence="1">AdSS</shortName>
        <ecNumber evidence="1">6.3.4.4</ecNumber>
    </recommendedName>
    <alternativeName>
        <fullName evidence="1">IMP--aspartate ligase</fullName>
    </alternativeName>
</protein>
<feature type="chain" id="PRO_1000201763" description="Adenylosuccinate synthetase">
    <location>
        <begin position="1"/>
        <end position="429"/>
    </location>
</feature>
<feature type="active site" description="Proton acceptor" evidence="1">
    <location>
        <position position="14"/>
    </location>
</feature>
<feature type="active site" description="Proton donor" evidence="1">
    <location>
        <position position="42"/>
    </location>
</feature>
<feature type="binding site" evidence="1">
    <location>
        <begin position="13"/>
        <end position="19"/>
    </location>
    <ligand>
        <name>GTP</name>
        <dbReference type="ChEBI" id="CHEBI:37565"/>
    </ligand>
</feature>
<feature type="binding site" description="in other chain" evidence="1">
    <location>
        <begin position="14"/>
        <end position="17"/>
    </location>
    <ligand>
        <name>IMP</name>
        <dbReference type="ChEBI" id="CHEBI:58053"/>
        <note>ligand shared between dimeric partners</note>
    </ligand>
</feature>
<feature type="binding site" evidence="1">
    <location>
        <position position="14"/>
    </location>
    <ligand>
        <name>Mg(2+)</name>
        <dbReference type="ChEBI" id="CHEBI:18420"/>
    </ligand>
</feature>
<feature type="binding site" description="in other chain" evidence="1">
    <location>
        <begin position="39"/>
        <end position="42"/>
    </location>
    <ligand>
        <name>IMP</name>
        <dbReference type="ChEBI" id="CHEBI:58053"/>
        <note>ligand shared between dimeric partners</note>
    </ligand>
</feature>
<feature type="binding site" evidence="1">
    <location>
        <begin position="41"/>
        <end position="43"/>
    </location>
    <ligand>
        <name>GTP</name>
        <dbReference type="ChEBI" id="CHEBI:37565"/>
    </ligand>
</feature>
<feature type="binding site" evidence="1">
    <location>
        <position position="41"/>
    </location>
    <ligand>
        <name>Mg(2+)</name>
        <dbReference type="ChEBI" id="CHEBI:18420"/>
    </ligand>
</feature>
<feature type="binding site" description="in other chain" evidence="1">
    <location>
        <position position="130"/>
    </location>
    <ligand>
        <name>IMP</name>
        <dbReference type="ChEBI" id="CHEBI:58053"/>
        <note>ligand shared between dimeric partners</note>
    </ligand>
</feature>
<feature type="binding site" evidence="1">
    <location>
        <position position="144"/>
    </location>
    <ligand>
        <name>IMP</name>
        <dbReference type="ChEBI" id="CHEBI:58053"/>
        <note>ligand shared between dimeric partners</note>
    </ligand>
</feature>
<feature type="binding site" description="in other chain" evidence="1">
    <location>
        <position position="225"/>
    </location>
    <ligand>
        <name>IMP</name>
        <dbReference type="ChEBI" id="CHEBI:58053"/>
        <note>ligand shared between dimeric partners</note>
    </ligand>
</feature>
<feature type="binding site" description="in other chain" evidence="1">
    <location>
        <position position="240"/>
    </location>
    <ligand>
        <name>IMP</name>
        <dbReference type="ChEBI" id="CHEBI:58053"/>
        <note>ligand shared between dimeric partners</note>
    </ligand>
</feature>
<feature type="binding site" evidence="1">
    <location>
        <begin position="300"/>
        <end position="306"/>
    </location>
    <ligand>
        <name>substrate</name>
    </ligand>
</feature>
<feature type="binding site" description="in other chain" evidence="1">
    <location>
        <position position="304"/>
    </location>
    <ligand>
        <name>IMP</name>
        <dbReference type="ChEBI" id="CHEBI:58053"/>
        <note>ligand shared between dimeric partners</note>
    </ligand>
</feature>
<feature type="binding site" evidence="1">
    <location>
        <position position="306"/>
    </location>
    <ligand>
        <name>GTP</name>
        <dbReference type="ChEBI" id="CHEBI:37565"/>
    </ligand>
</feature>
<feature type="binding site" evidence="1">
    <location>
        <begin position="332"/>
        <end position="334"/>
    </location>
    <ligand>
        <name>GTP</name>
        <dbReference type="ChEBI" id="CHEBI:37565"/>
    </ligand>
</feature>
<feature type="binding site" evidence="1">
    <location>
        <begin position="413"/>
        <end position="415"/>
    </location>
    <ligand>
        <name>GTP</name>
        <dbReference type="ChEBI" id="CHEBI:37565"/>
    </ligand>
</feature>
<dbReference type="EC" id="6.3.4.4" evidence="1"/>
<dbReference type="EMBL" id="AM181176">
    <property type="protein sequence ID" value="CAY46800.1"/>
    <property type="molecule type" value="Genomic_DNA"/>
</dbReference>
<dbReference type="RefSeq" id="WP_012721919.1">
    <property type="nucleotide sequence ID" value="NC_012660.1"/>
</dbReference>
<dbReference type="SMR" id="C3KDW8"/>
<dbReference type="STRING" id="294.SRM1_00587"/>
<dbReference type="PATRIC" id="fig|216595.4.peg.763"/>
<dbReference type="eggNOG" id="COG0104">
    <property type="taxonomic scope" value="Bacteria"/>
</dbReference>
<dbReference type="HOGENOM" id="CLU_029848_0_0_6"/>
<dbReference type="OrthoDB" id="9807553at2"/>
<dbReference type="UniPathway" id="UPA00075">
    <property type="reaction ID" value="UER00335"/>
</dbReference>
<dbReference type="GO" id="GO:0005737">
    <property type="term" value="C:cytoplasm"/>
    <property type="evidence" value="ECO:0007669"/>
    <property type="project" value="UniProtKB-SubCell"/>
</dbReference>
<dbReference type="GO" id="GO:0004019">
    <property type="term" value="F:adenylosuccinate synthase activity"/>
    <property type="evidence" value="ECO:0007669"/>
    <property type="project" value="UniProtKB-UniRule"/>
</dbReference>
<dbReference type="GO" id="GO:0005525">
    <property type="term" value="F:GTP binding"/>
    <property type="evidence" value="ECO:0007669"/>
    <property type="project" value="UniProtKB-UniRule"/>
</dbReference>
<dbReference type="GO" id="GO:0000287">
    <property type="term" value="F:magnesium ion binding"/>
    <property type="evidence" value="ECO:0007669"/>
    <property type="project" value="UniProtKB-UniRule"/>
</dbReference>
<dbReference type="GO" id="GO:0044208">
    <property type="term" value="P:'de novo' AMP biosynthetic process"/>
    <property type="evidence" value="ECO:0007669"/>
    <property type="project" value="UniProtKB-UniRule"/>
</dbReference>
<dbReference type="GO" id="GO:0046040">
    <property type="term" value="P:IMP metabolic process"/>
    <property type="evidence" value="ECO:0007669"/>
    <property type="project" value="TreeGrafter"/>
</dbReference>
<dbReference type="CDD" id="cd03108">
    <property type="entry name" value="AdSS"/>
    <property type="match status" value="1"/>
</dbReference>
<dbReference type="FunFam" id="1.10.300.10:FF:000001">
    <property type="entry name" value="Adenylosuccinate synthetase"/>
    <property type="match status" value="1"/>
</dbReference>
<dbReference type="FunFam" id="3.90.170.10:FF:000001">
    <property type="entry name" value="Adenylosuccinate synthetase"/>
    <property type="match status" value="1"/>
</dbReference>
<dbReference type="Gene3D" id="3.40.440.10">
    <property type="entry name" value="Adenylosuccinate Synthetase, subunit A, domain 1"/>
    <property type="match status" value="1"/>
</dbReference>
<dbReference type="Gene3D" id="1.10.300.10">
    <property type="entry name" value="Adenylosuccinate Synthetase, subunit A, domain 2"/>
    <property type="match status" value="1"/>
</dbReference>
<dbReference type="Gene3D" id="3.90.170.10">
    <property type="entry name" value="Adenylosuccinate Synthetase, subunit A, domain 3"/>
    <property type="match status" value="1"/>
</dbReference>
<dbReference type="HAMAP" id="MF_00011">
    <property type="entry name" value="Adenylosucc_synth"/>
    <property type="match status" value="1"/>
</dbReference>
<dbReference type="InterPro" id="IPR018220">
    <property type="entry name" value="Adenylosuccin_syn_GTP-bd"/>
</dbReference>
<dbReference type="InterPro" id="IPR033128">
    <property type="entry name" value="Adenylosuccin_syn_Lys_AS"/>
</dbReference>
<dbReference type="InterPro" id="IPR042109">
    <property type="entry name" value="Adenylosuccinate_synth_dom1"/>
</dbReference>
<dbReference type="InterPro" id="IPR042110">
    <property type="entry name" value="Adenylosuccinate_synth_dom2"/>
</dbReference>
<dbReference type="InterPro" id="IPR042111">
    <property type="entry name" value="Adenylosuccinate_synth_dom3"/>
</dbReference>
<dbReference type="InterPro" id="IPR001114">
    <property type="entry name" value="Adenylosuccinate_synthetase"/>
</dbReference>
<dbReference type="InterPro" id="IPR027417">
    <property type="entry name" value="P-loop_NTPase"/>
</dbReference>
<dbReference type="NCBIfam" id="NF002223">
    <property type="entry name" value="PRK01117.1"/>
    <property type="match status" value="1"/>
</dbReference>
<dbReference type="NCBIfam" id="TIGR00184">
    <property type="entry name" value="purA"/>
    <property type="match status" value="1"/>
</dbReference>
<dbReference type="PANTHER" id="PTHR11846">
    <property type="entry name" value="ADENYLOSUCCINATE SYNTHETASE"/>
    <property type="match status" value="1"/>
</dbReference>
<dbReference type="PANTHER" id="PTHR11846:SF0">
    <property type="entry name" value="ADENYLOSUCCINATE SYNTHETASE"/>
    <property type="match status" value="1"/>
</dbReference>
<dbReference type="Pfam" id="PF00709">
    <property type="entry name" value="Adenylsucc_synt"/>
    <property type="match status" value="1"/>
</dbReference>
<dbReference type="SMART" id="SM00788">
    <property type="entry name" value="Adenylsucc_synt"/>
    <property type="match status" value="1"/>
</dbReference>
<dbReference type="SUPFAM" id="SSF52540">
    <property type="entry name" value="P-loop containing nucleoside triphosphate hydrolases"/>
    <property type="match status" value="1"/>
</dbReference>
<dbReference type="PROSITE" id="PS01266">
    <property type="entry name" value="ADENYLOSUCCIN_SYN_1"/>
    <property type="match status" value="1"/>
</dbReference>
<dbReference type="PROSITE" id="PS00513">
    <property type="entry name" value="ADENYLOSUCCIN_SYN_2"/>
    <property type="match status" value="1"/>
</dbReference>
<gene>
    <name evidence="1" type="primary">purA</name>
    <name type="ordered locus">PFLU_0525</name>
</gene>
<reference key="1">
    <citation type="journal article" date="2009" name="Genome Biol.">
        <title>Genomic and genetic analyses of diversity and plant interactions of Pseudomonas fluorescens.</title>
        <authorList>
            <person name="Silby M.W."/>
            <person name="Cerdeno-Tarraga A.M."/>
            <person name="Vernikos G.S."/>
            <person name="Giddens S.R."/>
            <person name="Jackson R.W."/>
            <person name="Preston G.M."/>
            <person name="Zhang X.-X."/>
            <person name="Moon C.D."/>
            <person name="Gehrig S.M."/>
            <person name="Godfrey S.A.C."/>
            <person name="Knight C.G."/>
            <person name="Malone J.G."/>
            <person name="Robinson Z."/>
            <person name="Spiers A.J."/>
            <person name="Harris S."/>
            <person name="Challis G.L."/>
            <person name="Yaxley A.M."/>
            <person name="Harris D."/>
            <person name="Seeger K."/>
            <person name="Murphy L."/>
            <person name="Rutter S."/>
            <person name="Squares R."/>
            <person name="Quail M.A."/>
            <person name="Saunders E."/>
            <person name="Mavromatis K."/>
            <person name="Brettin T.S."/>
            <person name="Bentley S.D."/>
            <person name="Hothersall J."/>
            <person name="Stephens E."/>
            <person name="Thomas C.M."/>
            <person name="Parkhill J."/>
            <person name="Levy S.B."/>
            <person name="Rainey P.B."/>
            <person name="Thomson N.R."/>
        </authorList>
    </citation>
    <scope>NUCLEOTIDE SEQUENCE [LARGE SCALE GENOMIC DNA]</scope>
    <source>
        <strain>SBW25</strain>
    </source>
</reference>
<comment type="function">
    <text evidence="1">Plays an important role in the de novo pathway of purine nucleotide biosynthesis. Catalyzes the first committed step in the biosynthesis of AMP from IMP.</text>
</comment>
<comment type="catalytic activity">
    <reaction evidence="1">
        <text>IMP + L-aspartate + GTP = N(6)-(1,2-dicarboxyethyl)-AMP + GDP + phosphate + 2 H(+)</text>
        <dbReference type="Rhea" id="RHEA:15753"/>
        <dbReference type="ChEBI" id="CHEBI:15378"/>
        <dbReference type="ChEBI" id="CHEBI:29991"/>
        <dbReference type="ChEBI" id="CHEBI:37565"/>
        <dbReference type="ChEBI" id="CHEBI:43474"/>
        <dbReference type="ChEBI" id="CHEBI:57567"/>
        <dbReference type="ChEBI" id="CHEBI:58053"/>
        <dbReference type="ChEBI" id="CHEBI:58189"/>
        <dbReference type="EC" id="6.3.4.4"/>
    </reaction>
</comment>
<comment type="cofactor">
    <cofactor evidence="1">
        <name>Mg(2+)</name>
        <dbReference type="ChEBI" id="CHEBI:18420"/>
    </cofactor>
    <text evidence="1">Binds 1 Mg(2+) ion per subunit.</text>
</comment>
<comment type="pathway">
    <text evidence="1">Purine metabolism; AMP biosynthesis via de novo pathway; AMP from IMP: step 1/2.</text>
</comment>
<comment type="subunit">
    <text evidence="1">Homodimer.</text>
</comment>
<comment type="subcellular location">
    <subcellularLocation>
        <location evidence="1">Cytoplasm</location>
    </subcellularLocation>
</comment>
<comment type="similarity">
    <text evidence="1">Belongs to the adenylosuccinate synthetase family.</text>
</comment>
<proteinExistence type="inferred from homology"/>
<name>PURA_PSEFS</name>